<accession>B2S675</accession>
<protein>
    <recommendedName>
        <fullName evidence="1">Small ribosomal subunit protein uS19</fullName>
    </recommendedName>
    <alternativeName>
        <fullName evidence="2">30S ribosomal protein S19</fullName>
    </alternativeName>
</protein>
<name>RS19_BRUA1</name>
<keyword id="KW-0687">Ribonucleoprotein</keyword>
<keyword id="KW-0689">Ribosomal protein</keyword>
<keyword id="KW-0694">RNA-binding</keyword>
<keyword id="KW-0699">rRNA-binding</keyword>
<dbReference type="EMBL" id="CP000887">
    <property type="protein sequence ID" value="ACD72672.1"/>
    <property type="molecule type" value="Genomic_DNA"/>
</dbReference>
<dbReference type="RefSeq" id="WP_002964358.1">
    <property type="nucleotide sequence ID" value="NC_010742.1"/>
</dbReference>
<dbReference type="SMR" id="B2S675"/>
<dbReference type="GeneID" id="97533528"/>
<dbReference type="KEGG" id="bmc:BAbS19_I11670"/>
<dbReference type="HOGENOM" id="CLU_144911_0_1_5"/>
<dbReference type="Proteomes" id="UP000002565">
    <property type="component" value="Chromosome 1"/>
</dbReference>
<dbReference type="GO" id="GO:0005737">
    <property type="term" value="C:cytoplasm"/>
    <property type="evidence" value="ECO:0007669"/>
    <property type="project" value="UniProtKB-ARBA"/>
</dbReference>
<dbReference type="GO" id="GO:0015935">
    <property type="term" value="C:small ribosomal subunit"/>
    <property type="evidence" value="ECO:0007669"/>
    <property type="project" value="InterPro"/>
</dbReference>
<dbReference type="GO" id="GO:0019843">
    <property type="term" value="F:rRNA binding"/>
    <property type="evidence" value="ECO:0007669"/>
    <property type="project" value="UniProtKB-UniRule"/>
</dbReference>
<dbReference type="GO" id="GO:0003735">
    <property type="term" value="F:structural constituent of ribosome"/>
    <property type="evidence" value="ECO:0007669"/>
    <property type="project" value="InterPro"/>
</dbReference>
<dbReference type="GO" id="GO:0000028">
    <property type="term" value="P:ribosomal small subunit assembly"/>
    <property type="evidence" value="ECO:0007669"/>
    <property type="project" value="TreeGrafter"/>
</dbReference>
<dbReference type="GO" id="GO:0006412">
    <property type="term" value="P:translation"/>
    <property type="evidence" value="ECO:0007669"/>
    <property type="project" value="UniProtKB-UniRule"/>
</dbReference>
<dbReference type="FunFam" id="3.30.860.10:FF:000001">
    <property type="entry name" value="30S ribosomal protein S19"/>
    <property type="match status" value="1"/>
</dbReference>
<dbReference type="Gene3D" id="3.30.860.10">
    <property type="entry name" value="30s Ribosomal Protein S19, Chain A"/>
    <property type="match status" value="1"/>
</dbReference>
<dbReference type="HAMAP" id="MF_00531">
    <property type="entry name" value="Ribosomal_uS19"/>
    <property type="match status" value="1"/>
</dbReference>
<dbReference type="InterPro" id="IPR002222">
    <property type="entry name" value="Ribosomal_uS19"/>
</dbReference>
<dbReference type="InterPro" id="IPR005732">
    <property type="entry name" value="Ribosomal_uS19_bac-type"/>
</dbReference>
<dbReference type="InterPro" id="IPR020934">
    <property type="entry name" value="Ribosomal_uS19_CS"/>
</dbReference>
<dbReference type="InterPro" id="IPR023575">
    <property type="entry name" value="Ribosomal_uS19_SF"/>
</dbReference>
<dbReference type="NCBIfam" id="TIGR01050">
    <property type="entry name" value="rpsS_bact"/>
    <property type="match status" value="1"/>
</dbReference>
<dbReference type="PANTHER" id="PTHR11880">
    <property type="entry name" value="RIBOSOMAL PROTEIN S19P FAMILY MEMBER"/>
    <property type="match status" value="1"/>
</dbReference>
<dbReference type="PANTHER" id="PTHR11880:SF8">
    <property type="entry name" value="SMALL RIBOSOMAL SUBUNIT PROTEIN US19M"/>
    <property type="match status" value="1"/>
</dbReference>
<dbReference type="Pfam" id="PF00203">
    <property type="entry name" value="Ribosomal_S19"/>
    <property type="match status" value="1"/>
</dbReference>
<dbReference type="PIRSF" id="PIRSF002144">
    <property type="entry name" value="Ribosomal_S19"/>
    <property type="match status" value="1"/>
</dbReference>
<dbReference type="PRINTS" id="PR00975">
    <property type="entry name" value="RIBOSOMALS19"/>
</dbReference>
<dbReference type="SUPFAM" id="SSF54570">
    <property type="entry name" value="Ribosomal protein S19"/>
    <property type="match status" value="1"/>
</dbReference>
<dbReference type="PROSITE" id="PS00323">
    <property type="entry name" value="RIBOSOMAL_S19"/>
    <property type="match status" value="1"/>
</dbReference>
<evidence type="ECO:0000255" key="1">
    <source>
        <dbReference type="HAMAP-Rule" id="MF_00531"/>
    </source>
</evidence>
<evidence type="ECO:0000305" key="2"/>
<reference key="1">
    <citation type="journal article" date="2008" name="PLoS ONE">
        <title>Genome sequence of Brucella abortus vaccine strain S19 compared to virulent strains yields candidate virulence genes.</title>
        <authorList>
            <person name="Crasta O.R."/>
            <person name="Folkerts O."/>
            <person name="Fei Z."/>
            <person name="Mane S.P."/>
            <person name="Evans C."/>
            <person name="Martino-Catt S."/>
            <person name="Bricker B."/>
            <person name="Yu G."/>
            <person name="Du L."/>
            <person name="Sobral B.W."/>
        </authorList>
    </citation>
    <scope>NUCLEOTIDE SEQUENCE [LARGE SCALE GENOMIC DNA]</scope>
    <source>
        <strain>S19</strain>
    </source>
</reference>
<organism>
    <name type="scientific">Brucella abortus (strain S19)</name>
    <dbReference type="NCBI Taxonomy" id="430066"/>
    <lineage>
        <taxon>Bacteria</taxon>
        <taxon>Pseudomonadati</taxon>
        <taxon>Pseudomonadota</taxon>
        <taxon>Alphaproteobacteria</taxon>
        <taxon>Hyphomicrobiales</taxon>
        <taxon>Brucellaceae</taxon>
        <taxon>Brucella/Ochrobactrum group</taxon>
        <taxon>Brucella</taxon>
    </lineage>
</organism>
<gene>
    <name evidence="1" type="primary">rpsS</name>
    <name type="ordered locus">BAbS19_I11670</name>
</gene>
<comment type="function">
    <text evidence="1">Protein S19 forms a complex with S13 that binds strongly to the 16S ribosomal RNA.</text>
</comment>
<comment type="similarity">
    <text evidence="1">Belongs to the universal ribosomal protein uS19 family.</text>
</comment>
<feature type="chain" id="PRO_1000127937" description="Small ribosomal subunit protein uS19">
    <location>
        <begin position="1"/>
        <end position="92"/>
    </location>
</feature>
<sequence length="92" mass="10444">MARSVWKGPFVDGYLLKKAEKVREGGRNEVIKMWSRRSTILPQFVGLTFGVYNGNKHVPVSVSEEMVGHKFGEFAPTRTYYGHGADKKAKRK</sequence>
<proteinExistence type="inferred from homology"/>